<name>TOM22_HUMAN</name>
<organism>
    <name type="scientific">Homo sapiens</name>
    <name type="common">Human</name>
    <dbReference type="NCBI Taxonomy" id="9606"/>
    <lineage>
        <taxon>Eukaryota</taxon>
        <taxon>Metazoa</taxon>
        <taxon>Chordata</taxon>
        <taxon>Craniata</taxon>
        <taxon>Vertebrata</taxon>
        <taxon>Euteleostomi</taxon>
        <taxon>Mammalia</taxon>
        <taxon>Eutheria</taxon>
        <taxon>Euarchontoglires</taxon>
        <taxon>Primates</taxon>
        <taxon>Haplorrhini</taxon>
        <taxon>Catarrhini</taxon>
        <taxon>Hominidae</taxon>
        <taxon>Homo</taxon>
    </lineage>
</organism>
<feature type="initiator methionine" description="Removed" evidence="8 12 13 14 15 17">
    <location>
        <position position="1"/>
    </location>
</feature>
<feature type="chain" id="PRO_0000076106" description="Mitochondrial import receptor subunit TOM22 homolog">
    <location>
        <begin position="2"/>
        <end position="142"/>
    </location>
</feature>
<feature type="topological domain" description="Cytoplasmic" evidence="4">
    <location>
        <begin position="2"/>
        <end position="83"/>
    </location>
</feature>
<feature type="transmembrane region" description="Helical" evidence="4">
    <location>
        <begin position="84"/>
        <end position="103"/>
    </location>
</feature>
<feature type="topological domain" description="Mitochondrial intermembrane" evidence="4">
    <location>
        <begin position="104"/>
        <end position="142"/>
    </location>
</feature>
<feature type="region of interest" description="Disordered" evidence="5">
    <location>
        <begin position="1"/>
        <end position="42"/>
    </location>
</feature>
<feature type="region of interest" description="Import sequence; necessary for mitochondrion outer membrane localization and integration in the TOM complex" evidence="1">
    <location>
        <begin position="41"/>
        <end position="50"/>
    </location>
</feature>
<feature type="region of interest" description="TMD; necessary for mitochondrion outer membrane localization and integration in the TOM complex" evidence="1">
    <location>
        <begin position="83"/>
        <end position="103"/>
    </location>
</feature>
<feature type="region of interest" description="C-tail signal; necessary for mitochondrion outer membrane localization and integration in the TOM complex" evidence="1">
    <location>
        <begin position="123"/>
        <end position="142"/>
    </location>
</feature>
<feature type="compositionally biased region" description="Low complexity" evidence="5">
    <location>
        <begin position="1"/>
        <end position="11"/>
    </location>
</feature>
<feature type="compositionally biased region" description="Acidic residues" evidence="5">
    <location>
        <begin position="27"/>
        <end position="42"/>
    </location>
</feature>
<feature type="modified residue" description="N-acetylalanine" evidence="8 12 13 14 15 17">
    <location>
        <position position="2"/>
    </location>
</feature>
<feature type="modified residue" description="Phosphoserine" evidence="10 13 14 16">
    <location>
        <position position="15"/>
    </location>
</feature>
<feature type="modified residue" description="Phosphothreonine" evidence="11">
    <location>
        <position position="43"/>
    </location>
</feature>
<feature type="modified residue" description="Phosphoserine" evidence="3">
    <location>
        <position position="45"/>
    </location>
</feature>
<feature type="helix" evidence="18">
    <location>
        <begin position="30"/>
        <end position="38"/>
    </location>
</feature>
<feature type="helix" evidence="18">
    <location>
        <begin position="45"/>
        <end position="54"/>
    </location>
</feature>
<feature type="strand" evidence="18">
    <location>
        <begin position="55"/>
        <end position="58"/>
    </location>
</feature>
<feature type="helix" evidence="19">
    <location>
        <begin position="64"/>
        <end position="95"/>
    </location>
</feature>
<feature type="helix" evidence="19">
    <location>
        <begin position="97"/>
        <end position="117"/>
    </location>
</feature>
<proteinExistence type="evidence at protein level"/>
<reference key="1">
    <citation type="journal article" date="2000" name="Mol. Cell. Biol.">
        <title>Identification and functional analysis of human Tom22 for protein import into mitochondria.</title>
        <authorList>
            <person name="Yano M."/>
            <person name="Hoogenraad N."/>
            <person name="Terada K."/>
            <person name="Mori M."/>
        </authorList>
    </citation>
    <scope>NUCLEOTIDE SEQUENCE [MRNA]</scope>
    <scope>FUNCTION</scope>
    <scope>SUBCELLULAR LOCATION</scope>
    <source>
        <tissue>Liver</tissue>
    </source>
</reference>
<reference key="2">
    <citation type="journal article" date="2000" name="J. Biol. Chem.">
        <title>Identification of mammalian Tom22 as a subunit of the preprotein translocase of the mitochondrial outer membrane.</title>
        <authorList>
            <person name="Saeki K."/>
            <person name="Suzuki H."/>
            <person name="Tsuneoka M."/>
            <person name="Maeda M."/>
            <person name="Iwamoto R."/>
            <person name="Hasuwa H."/>
            <person name="Shida S."/>
            <person name="Takahashi T."/>
            <person name="Sakaguchi M."/>
            <person name="Endo T."/>
            <person name="Miura Y."/>
            <person name="Mekada E."/>
            <person name="Mihara K."/>
        </authorList>
    </citation>
    <scope>NUCLEOTIDE SEQUENCE [MRNA]</scope>
    <scope>PROTEIN SEQUENCE OF 24-31; 48-58; 61-76 AND 107-135</scope>
    <source>
        <tissue>Myeloid leukemia cell</tissue>
    </source>
</reference>
<reference key="3">
    <citation type="journal article" date="2004" name="Nat. Genet.">
        <title>Complete sequencing and characterization of 21,243 full-length human cDNAs.</title>
        <authorList>
            <person name="Ota T."/>
            <person name="Suzuki Y."/>
            <person name="Nishikawa T."/>
            <person name="Otsuki T."/>
            <person name="Sugiyama T."/>
            <person name="Irie R."/>
            <person name="Wakamatsu A."/>
            <person name="Hayashi K."/>
            <person name="Sato H."/>
            <person name="Nagai K."/>
            <person name="Kimura K."/>
            <person name="Makita H."/>
            <person name="Sekine M."/>
            <person name="Obayashi M."/>
            <person name="Nishi T."/>
            <person name="Shibahara T."/>
            <person name="Tanaka T."/>
            <person name="Ishii S."/>
            <person name="Yamamoto J."/>
            <person name="Saito K."/>
            <person name="Kawai Y."/>
            <person name="Isono Y."/>
            <person name="Nakamura Y."/>
            <person name="Nagahari K."/>
            <person name="Murakami K."/>
            <person name="Yasuda T."/>
            <person name="Iwayanagi T."/>
            <person name="Wagatsuma M."/>
            <person name="Shiratori A."/>
            <person name="Sudo H."/>
            <person name="Hosoiri T."/>
            <person name="Kaku Y."/>
            <person name="Kodaira H."/>
            <person name="Kondo H."/>
            <person name="Sugawara M."/>
            <person name="Takahashi M."/>
            <person name="Kanda K."/>
            <person name="Yokoi T."/>
            <person name="Furuya T."/>
            <person name="Kikkawa E."/>
            <person name="Omura Y."/>
            <person name="Abe K."/>
            <person name="Kamihara K."/>
            <person name="Katsuta N."/>
            <person name="Sato K."/>
            <person name="Tanikawa M."/>
            <person name="Yamazaki M."/>
            <person name="Ninomiya K."/>
            <person name="Ishibashi T."/>
            <person name="Yamashita H."/>
            <person name="Murakawa K."/>
            <person name="Fujimori K."/>
            <person name="Tanai H."/>
            <person name="Kimata M."/>
            <person name="Watanabe M."/>
            <person name="Hiraoka S."/>
            <person name="Chiba Y."/>
            <person name="Ishida S."/>
            <person name="Ono Y."/>
            <person name="Takiguchi S."/>
            <person name="Watanabe S."/>
            <person name="Yosida M."/>
            <person name="Hotuta T."/>
            <person name="Kusano J."/>
            <person name="Kanehori K."/>
            <person name="Takahashi-Fujii A."/>
            <person name="Hara H."/>
            <person name="Tanase T.-O."/>
            <person name="Nomura Y."/>
            <person name="Togiya S."/>
            <person name="Komai F."/>
            <person name="Hara R."/>
            <person name="Takeuchi K."/>
            <person name="Arita M."/>
            <person name="Imose N."/>
            <person name="Musashino K."/>
            <person name="Yuuki H."/>
            <person name="Oshima A."/>
            <person name="Sasaki N."/>
            <person name="Aotsuka S."/>
            <person name="Yoshikawa Y."/>
            <person name="Matsunawa H."/>
            <person name="Ichihara T."/>
            <person name="Shiohata N."/>
            <person name="Sano S."/>
            <person name="Moriya S."/>
            <person name="Momiyama H."/>
            <person name="Satoh N."/>
            <person name="Takami S."/>
            <person name="Terashima Y."/>
            <person name="Suzuki O."/>
            <person name="Nakagawa S."/>
            <person name="Senoh A."/>
            <person name="Mizoguchi H."/>
            <person name="Goto Y."/>
            <person name="Shimizu F."/>
            <person name="Wakebe H."/>
            <person name="Hishigaki H."/>
            <person name="Watanabe T."/>
            <person name="Sugiyama A."/>
            <person name="Takemoto M."/>
            <person name="Kawakami B."/>
            <person name="Yamazaki M."/>
            <person name="Watanabe K."/>
            <person name="Kumagai A."/>
            <person name="Itakura S."/>
            <person name="Fukuzumi Y."/>
            <person name="Fujimori Y."/>
            <person name="Komiyama M."/>
            <person name="Tashiro H."/>
            <person name="Tanigami A."/>
            <person name="Fujiwara T."/>
            <person name="Ono T."/>
            <person name="Yamada K."/>
            <person name="Fujii Y."/>
            <person name="Ozaki K."/>
            <person name="Hirao M."/>
            <person name="Ohmori Y."/>
            <person name="Kawabata A."/>
            <person name="Hikiji T."/>
            <person name="Kobatake N."/>
            <person name="Inagaki H."/>
            <person name="Ikema Y."/>
            <person name="Okamoto S."/>
            <person name="Okitani R."/>
            <person name="Kawakami T."/>
            <person name="Noguchi S."/>
            <person name="Itoh T."/>
            <person name="Shigeta K."/>
            <person name="Senba T."/>
            <person name="Matsumura K."/>
            <person name="Nakajima Y."/>
            <person name="Mizuno T."/>
            <person name="Morinaga M."/>
            <person name="Sasaki M."/>
            <person name="Togashi T."/>
            <person name="Oyama M."/>
            <person name="Hata H."/>
            <person name="Watanabe M."/>
            <person name="Komatsu T."/>
            <person name="Mizushima-Sugano J."/>
            <person name="Satoh T."/>
            <person name="Shirai Y."/>
            <person name="Takahashi Y."/>
            <person name="Nakagawa K."/>
            <person name="Okumura K."/>
            <person name="Nagase T."/>
            <person name="Nomura N."/>
            <person name="Kikuchi H."/>
            <person name="Masuho Y."/>
            <person name="Yamashita R."/>
            <person name="Nakai K."/>
            <person name="Yada T."/>
            <person name="Nakamura Y."/>
            <person name="Ohara O."/>
            <person name="Isogai T."/>
            <person name="Sugano S."/>
        </authorList>
    </citation>
    <scope>NUCLEOTIDE SEQUENCE [LARGE SCALE MRNA]</scope>
</reference>
<reference key="4">
    <citation type="journal article" date="2004" name="Genome Biol.">
        <title>A genome annotation-driven approach to cloning the human ORFeome.</title>
        <authorList>
            <person name="Collins J.E."/>
            <person name="Wright C.L."/>
            <person name="Edwards C.A."/>
            <person name="Davis M.P."/>
            <person name="Grinham J.A."/>
            <person name="Cole C.G."/>
            <person name="Goward M.E."/>
            <person name="Aguado B."/>
            <person name="Mallya M."/>
            <person name="Mokrab Y."/>
            <person name="Huckle E.J."/>
            <person name="Beare D.M."/>
            <person name="Dunham I."/>
        </authorList>
    </citation>
    <scope>NUCLEOTIDE SEQUENCE [LARGE SCALE MRNA]</scope>
</reference>
<reference key="5">
    <citation type="journal article" date="2004" name="Genome Res.">
        <title>The status, quality, and expansion of the NIH full-length cDNA project: the Mammalian Gene Collection (MGC).</title>
        <authorList>
            <consortium name="The MGC Project Team"/>
        </authorList>
    </citation>
    <scope>NUCLEOTIDE SEQUENCE [LARGE SCALE MRNA]</scope>
    <source>
        <tissue>Uterus</tissue>
    </source>
</reference>
<reference key="6">
    <citation type="submission" date="2005-06" db="UniProtKB">
        <authorList>
            <person name="Bienvenut W.V."/>
        </authorList>
    </citation>
    <scope>PROTEIN SEQUENCE OF 2-22; 48-58 AND 61-76</scope>
    <scope>CLEAVAGE OF INITIATOR METHIONINE</scope>
    <scope>ACETYLATION AT ALA-2</scope>
    <scope>IDENTIFICATION BY MASS SPECTROMETRY</scope>
    <source>
        <tissue>B-cell lymphoma</tissue>
    </source>
</reference>
<reference key="7">
    <citation type="journal article" date="2006" name="Cell">
        <title>Global, in vivo, and site-specific phosphorylation dynamics in signaling networks.</title>
        <authorList>
            <person name="Olsen J.V."/>
            <person name="Blagoev B."/>
            <person name="Gnad F."/>
            <person name="Macek B."/>
            <person name="Kumar C."/>
            <person name="Mortensen P."/>
            <person name="Mann M."/>
        </authorList>
    </citation>
    <scope>PHOSPHORYLATION [LARGE SCALE ANALYSIS] AT SER-15</scope>
    <scope>IDENTIFICATION BY MASS SPECTROMETRY [LARGE SCALE ANALYSIS]</scope>
    <source>
        <tissue>Cervix carcinoma</tissue>
    </source>
</reference>
<reference key="8">
    <citation type="journal article" date="2008" name="Biochem. Biophys. Res. Commun.">
        <title>Identification of Tom5 and Tom6 in the preprotein translocase complex of human mitochondrial outer membrane.</title>
        <authorList>
            <person name="Kato H."/>
            <person name="Mihara K."/>
        </authorList>
    </citation>
    <scope>IDENTIFICATION IN THE TOM COMPLEX</scope>
</reference>
<reference key="9">
    <citation type="journal article" date="2008" name="Proc. Natl. Acad. Sci. U.S.A.">
        <title>A quantitative atlas of mitotic phosphorylation.</title>
        <authorList>
            <person name="Dephoure N."/>
            <person name="Zhou C."/>
            <person name="Villen J."/>
            <person name="Beausoleil S.A."/>
            <person name="Bakalarski C.E."/>
            <person name="Elledge S.J."/>
            <person name="Gygi S.P."/>
        </authorList>
    </citation>
    <scope>PHOSPHORYLATION [LARGE SCALE ANALYSIS] AT THR-43</scope>
    <scope>IDENTIFICATION BY MASS SPECTROMETRY [LARGE SCALE ANALYSIS]</scope>
    <source>
        <tissue>Cervix carcinoma</tissue>
    </source>
</reference>
<reference key="10">
    <citation type="journal article" date="2009" name="Anal. Chem.">
        <title>Lys-N and trypsin cover complementary parts of the phosphoproteome in a refined SCX-based approach.</title>
        <authorList>
            <person name="Gauci S."/>
            <person name="Helbig A.O."/>
            <person name="Slijper M."/>
            <person name="Krijgsveld J."/>
            <person name="Heck A.J."/>
            <person name="Mohammed S."/>
        </authorList>
    </citation>
    <scope>ACETYLATION [LARGE SCALE ANALYSIS] AT ALA-2</scope>
    <scope>CLEAVAGE OF INITIATOR METHIONINE [LARGE SCALE ANALYSIS]</scope>
    <scope>IDENTIFICATION BY MASS SPECTROMETRY [LARGE SCALE ANALYSIS]</scope>
</reference>
<reference key="11">
    <citation type="journal article" date="2010" name="Sci. Signal.">
        <title>Quantitative phosphoproteomics reveals widespread full phosphorylation site occupancy during mitosis.</title>
        <authorList>
            <person name="Olsen J.V."/>
            <person name="Vermeulen M."/>
            <person name="Santamaria A."/>
            <person name="Kumar C."/>
            <person name="Miller M.L."/>
            <person name="Jensen L.J."/>
            <person name="Gnad F."/>
            <person name="Cox J."/>
            <person name="Jensen T.S."/>
            <person name="Nigg E.A."/>
            <person name="Brunak S."/>
            <person name="Mann M."/>
        </authorList>
    </citation>
    <scope>ACETYLATION [LARGE SCALE ANALYSIS] AT ALA-2</scope>
    <scope>PHOSPHORYLATION [LARGE SCALE ANALYSIS] AT SER-15</scope>
    <scope>CLEAVAGE OF INITIATOR METHIONINE [LARGE SCALE ANALYSIS]</scope>
    <scope>IDENTIFICATION BY MASS SPECTROMETRY [LARGE SCALE ANALYSIS]</scope>
    <source>
        <tissue>Cervix carcinoma</tissue>
    </source>
</reference>
<reference key="12">
    <citation type="journal article" date="2011" name="BMC Syst. Biol.">
        <title>Initial characterization of the human central proteome.</title>
        <authorList>
            <person name="Burkard T.R."/>
            <person name="Planyavsky M."/>
            <person name="Kaupe I."/>
            <person name="Breitwieser F.P."/>
            <person name="Buerckstuemmer T."/>
            <person name="Bennett K.L."/>
            <person name="Superti-Furga G."/>
            <person name="Colinge J."/>
        </authorList>
    </citation>
    <scope>IDENTIFICATION BY MASS SPECTROMETRY [LARGE SCALE ANALYSIS]</scope>
</reference>
<reference key="13">
    <citation type="journal article" date="2011" name="Sci. Signal.">
        <title>System-wide temporal characterization of the proteome and phosphoproteome of human embryonic stem cell differentiation.</title>
        <authorList>
            <person name="Rigbolt K.T."/>
            <person name="Prokhorova T.A."/>
            <person name="Akimov V."/>
            <person name="Henningsen J."/>
            <person name="Johansen P.T."/>
            <person name="Kratchmarova I."/>
            <person name="Kassem M."/>
            <person name="Mann M."/>
            <person name="Olsen J.V."/>
            <person name="Blagoev B."/>
        </authorList>
    </citation>
    <scope>ACETYLATION [LARGE SCALE ANALYSIS] AT ALA-2</scope>
    <scope>PHOSPHORYLATION [LARGE SCALE ANALYSIS] AT SER-15</scope>
    <scope>CLEAVAGE OF INITIATOR METHIONINE [LARGE SCALE ANALYSIS]</scope>
    <scope>IDENTIFICATION BY MASS SPECTROMETRY [LARGE SCALE ANALYSIS]</scope>
</reference>
<reference key="14">
    <citation type="journal article" date="2012" name="Mol. Cell. Proteomics">
        <title>Comparative large-scale characterisation of plant vs. mammal proteins reveals similar and idiosyncratic N-alpha acetylation features.</title>
        <authorList>
            <person name="Bienvenut W.V."/>
            <person name="Sumpton D."/>
            <person name="Martinez A."/>
            <person name="Lilla S."/>
            <person name="Espagne C."/>
            <person name="Meinnel T."/>
            <person name="Giglione C."/>
        </authorList>
    </citation>
    <scope>ACETYLATION [LARGE SCALE ANALYSIS] AT ALA-2</scope>
    <scope>CLEAVAGE OF INITIATOR METHIONINE [LARGE SCALE ANALYSIS]</scope>
    <scope>IDENTIFICATION BY MASS SPECTROMETRY [LARGE SCALE ANALYSIS]</scope>
</reference>
<reference key="15">
    <citation type="journal article" date="2013" name="J. Proteome Res.">
        <title>Toward a comprehensive characterization of a human cancer cell phosphoproteome.</title>
        <authorList>
            <person name="Zhou H."/>
            <person name="Di Palma S."/>
            <person name="Preisinger C."/>
            <person name="Peng M."/>
            <person name="Polat A.N."/>
            <person name="Heck A.J."/>
            <person name="Mohammed S."/>
        </authorList>
    </citation>
    <scope>PHOSPHORYLATION [LARGE SCALE ANALYSIS] AT SER-15</scope>
    <scope>IDENTIFICATION BY MASS SPECTROMETRY [LARGE SCALE ANALYSIS]</scope>
    <source>
        <tissue>Cervix carcinoma</tissue>
        <tissue>Erythroleukemia</tissue>
    </source>
</reference>
<reference key="16">
    <citation type="journal article" date="2015" name="Proteomics">
        <title>N-terminome analysis of the human mitochondrial proteome.</title>
        <authorList>
            <person name="Vaca Jacome A.S."/>
            <person name="Rabilloud T."/>
            <person name="Schaeffer-Reiss C."/>
            <person name="Rompais M."/>
            <person name="Ayoub D."/>
            <person name="Lane L."/>
            <person name="Bairoch A."/>
            <person name="Van Dorsselaer A."/>
            <person name="Carapito C."/>
        </authorList>
    </citation>
    <scope>ACETYLATION [LARGE SCALE ANALYSIS] AT ALA-2</scope>
    <scope>CLEAVAGE OF INITIATOR METHIONINE [LARGE SCALE ANALYSIS]</scope>
    <scope>IDENTIFICATION BY MASS SPECTROMETRY [LARGE SCALE ANALYSIS]</scope>
</reference>
<gene>
    <name type="primary">TOMM22</name>
    <name type="synonym">TOM22</name>
</gene>
<dbReference type="EMBL" id="AB040119">
    <property type="protein sequence ID" value="BAB03306.1"/>
    <property type="molecule type" value="mRNA"/>
</dbReference>
<dbReference type="EMBL" id="AB041906">
    <property type="protein sequence ID" value="BAB16408.1"/>
    <property type="molecule type" value="mRNA"/>
</dbReference>
<dbReference type="EMBL" id="AK024731">
    <property type="protein sequence ID" value="BAB14979.1"/>
    <property type="molecule type" value="mRNA"/>
</dbReference>
<dbReference type="EMBL" id="CR456475">
    <property type="protein sequence ID" value="CAG30361.1"/>
    <property type="molecule type" value="mRNA"/>
</dbReference>
<dbReference type="EMBL" id="BC009363">
    <property type="protein sequence ID" value="AAH09363.1"/>
    <property type="molecule type" value="mRNA"/>
</dbReference>
<dbReference type="CCDS" id="CCDS13975.1"/>
<dbReference type="RefSeq" id="NP_064628.1">
    <property type="nucleotide sequence ID" value="NM_020243.5"/>
</dbReference>
<dbReference type="PDB" id="7CK6">
    <property type="method" value="EM"/>
    <property type="resolution" value="3.40 A"/>
    <property type="chains" value="C/D=1-142"/>
</dbReference>
<dbReference type="PDB" id="7CP9">
    <property type="method" value="EM"/>
    <property type="resolution" value="3.00 A"/>
    <property type="chains" value="G/H=1-142"/>
</dbReference>
<dbReference type="PDB" id="7VBY">
    <property type="method" value="EM"/>
    <property type="resolution" value="2.54 A"/>
    <property type="chains" value="C/H=1-142"/>
</dbReference>
<dbReference type="PDB" id="7VC4">
    <property type="method" value="EM"/>
    <property type="resolution" value="3.74 A"/>
    <property type="chains" value="C/H=1-142"/>
</dbReference>
<dbReference type="PDB" id="7VD2">
    <property type="method" value="EM"/>
    <property type="resolution" value="2.53 A"/>
    <property type="chains" value="C/H=1-142"/>
</dbReference>
<dbReference type="PDB" id="7VDD">
    <property type="method" value="EM"/>
    <property type="resolution" value="3.74 A"/>
    <property type="chains" value="C/H=1-142"/>
</dbReference>
<dbReference type="PDB" id="8XVA">
    <property type="method" value="EM"/>
    <property type="resolution" value="5.92 A"/>
    <property type="chains" value="C/H=1-142"/>
</dbReference>
<dbReference type="PDB" id="9EIH">
    <property type="method" value="EM"/>
    <property type="resolution" value="3.10 A"/>
    <property type="chains" value="Q/R/S/T=1-142"/>
</dbReference>
<dbReference type="PDB" id="9EII">
    <property type="method" value="EM"/>
    <property type="resolution" value="2.75 A"/>
    <property type="chains" value="R/T=1-142"/>
</dbReference>
<dbReference type="PDB" id="9EIJ">
    <property type="method" value="EM"/>
    <property type="resolution" value="3.30 A"/>
    <property type="chains" value="R/T=1-142"/>
</dbReference>
<dbReference type="PDBsum" id="7CK6"/>
<dbReference type="PDBsum" id="7CP9"/>
<dbReference type="PDBsum" id="7VBY"/>
<dbReference type="PDBsum" id="7VC4"/>
<dbReference type="PDBsum" id="7VD2"/>
<dbReference type="PDBsum" id="7VDD"/>
<dbReference type="PDBsum" id="8XVA"/>
<dbReference type="PDBsum" id="9EIH"/>
<dbReference type="PDBsum" id="9EII"/>
<dbReference type="PDBsum" id="9EIJ"/>
<dbReference type="EMDB" id="EMD-30382"/>
<dbReference type="EMDB" id="EMD-30421"/>
<dbReference type="EMDB" id="EMD-31885"/>
<dbReference type="EMDB" id="EMD-31888"/>
<dbReference type="EMDB" id="EMD-31904"/>
<dbReference type="EMDB" id="EMD-31914"/>
<dbReference type="EMDB" id="EMD-38694"/>
<dbReference type="EMDB" id="EMD-48083"/>
<dbReference type="EMDB" id="EMD-48084"/>
<dbReference type="EMDB" id="EMD-48085"/>
<dbReference type="SMR" id="Q9NS69"/>
<dbReference type="BioGRID" id="121308">
    <property type="interactions" value="427"/>
</dbReference>
<dbReference type="ComplexPortal" id="CPX-6121">
    <property type="entry name" value="TOM40 mitochondrial outer membrane translocase complex"/>
</dbReference>
<dbReference type="CORUM" id="Q9NS69"/>
<dbReference type="FunCoup" id="Q9NS69">
    <property type="interactions" value="2642"/>
</dbReference>
<dbReference type="IntAct" id="Q9NS69">
    <property type="interactions" value="208"/>
</dbReference>
<dbReference type="MINT" id="Q9NS69"/>
<dbReference type="STRING" id="9606.ENSP00000216034"/>
<dbReference type="iPTMnet" id="Q9NS69"/>
<dbReference type="MetOSite" id="Q9NS69"/>
<dbReference type="PhosphoSitePlus" id="Q9NS69"/>
<dbReference type="SwissPalm" id="Q9NS69"/>
<dbReference type="BioMuta" id="TOMM22"/>
<dbReference type="jPOST" id="Q9NS69"/>
<dbReference type="MassIVE" id="Q9NS69"/>
<dbReference type="PaxDb" id="9606-ENSP00000216034"/>
<dbReference type="PeptideAtlas" id="Q9NS69"/>
<dbReference type="ProteomicsDB" id="82500"/>
<dbReference type="Pumba" id="Q9NS69"/>
<dbReference type="TopDownProteomics" id="Q9NS69"/>
<dbReference type="Antibodypedia" id="291">
    <property type="antibodies" value="135 antibodies from 28 providers"/>
</dbReference>
<dbReference type="DNASU" id="56993"/>
<dbReference type="Ensembl" id="ENST00000216034.6">
    <property type="protein sequence ID" value="ENSP00000216034.4"/>
    <property type="gene ID" value="ENSG00000100216.6"/>
</dbReference>
<dbReference type="GeneID" id="56993"/>
<dbReference type="KEGG" id="hsa:56993"/>
<dbReference type="MANE-Select" id="ENST00000216034.6">
    <property type="protein sequence ID" value="ENSP00000216034.4"/>
    <property type="RefSeq nucleotide sequence ID" value="NM_020243.5"/>
    <property type="RefSeq protein sequence ID" value="NP_064628.1"/>
</dbReference>
<dbReference type="UCSC" id="uc003awe.4">
    <property type="organism name" value="human"/>
</dbReference>
<dbReference type="AGR" id="HGNC:18002"/>
<dbReference type="CTD" id="56993"/>
<dbReference type="DisGeNET" id="56993"/>
<dbReference type="GeneCards" id="TOMM22"/>
<dbReference type="HGNC" id="HGNC:18002">
    <property type="gene designation" value="TOMM22"/>
</dbReference>
<dbReference type="HPA" id="ENSG00000100216">
    <property type="expression patterns" value="Low tissue specificity"/>
</dbReference>
<dbReference type="MIM" id="607046">
    <property type="type" value="gene"/>
</dbReference>
<dbReference type="neXtProt" id="NX_Q9NS69"/>
<dbReference type="OpenTargets" id="ENSG00000100216"/>
<dbReference type="PharmGKB" id="PA38275"/>
<dbReference type="VEuPathDB" id="HostDB:ENSG00000100216"/>
<dbReference type="eggNOG" id="KOG4111">
    <property type="taxonomic scope" value="Eukaryota"/>
</dbReference>
<dbReference type="GeneTree" id="ENSGT00390000016475"/>
<dbReference type="HOGENOM" id="CLU_108175_1_0_1"/>
<dbReference type="InParanoid" id="Q9NS69"/>
<dbReference type="OMA" id="DKDSGME"/>
<dbReference type="OrthoDB" id="10016939at2759"/>
<dbReference type="PAN-GO" id="Q9NS69">
    <property type="GO annotations" value="0 GO annotations based on evolutionary models"/>
</dbReference>
<dbReference type="PhylomeDB" id="Q9NS69"/>
<dbReference type="TreeFam" id="TF106201"/>
<dbReference type="PathwayCommons" id="Q9NS69"/>
<dbReference type="Reactome" id="R-HSA-1268020">
    <property type="pathway name" value="Mitochondrial protein import"/>
</dbReference>
<dbReference type="Reactome" id="R-HSA-5205685">
    <property type="pathway name" value="PINK1-PRKN Mediated Mitophagy"/>
</dbReference>
<dbReference type="SignaLink" id="Q9NS69"/>
<dbReference type="SIGNOR" id="Q9NS69"/>
<dbReference type="BioGRID-ORCS" id="56993">
    <property type="hits" value="778 hits in 1176 CRISPR screens"/>
</dbReference>
<dbReference type="ChiTaRS" id="TOMM22">
    <property type="organism name" value="human"/>
</dbReference>
<dbReference type="GeneWiki" id="TOMM22"/>
<dbReference type="GenomeRNAi" id="56993"/>
<dbReference type="Pharos" id="Q9NS69">
    <property type="development level" value="Tbio"/>
</dbReference>
<dbReference type="PRO" id="PR:Q9NS69"/>
<dbReference type="Proteomes" id="UP000005640">
    <property type="component" value="Chromosome 22"/>
</dbReference>
<dbReference type="RNAct" id="Q9NS69">
    <property type="molecule type" value="protein"/>
</dbReference>
<dbReference type="Bgee" id="ENSG00000100216">
    <property type="expression patterns" value="Expressed in tendon of biceps brachii and 195 other cell types or tissues"/>
</dbReference>
<dbReference type="ExpressionAtlas" id="Q9NS69">
    <property type="expression patterns" value="baseline and differential"/>
</dbReference>
<dbReference type="GO" id="GO:0016020">
    <property type="term" value="C:membrane"/>
    <property type="evidence" value="ECO:0000314"/>
    <property type="project" value="BHF-UCL"/>
</dbReference>
<dbReference type="GO" id="GO:0005741">
    <property type="term" value="C:mitochondrial outer membrane"/>
    <property type="evidence" value="ECO:0000304"/>
    <property type="project" value="Reactome"/>
</dbReference>
<dbReference type="GO" id="GO:0005742">
    <property type="term" value="C:mitochondrial outer membrane translocase complex"/>
    <property type="evidence" value="ECO:0000314"/>
    <property type="project" value="BHF-UCL"/>
</dbReference>
<dbReference type="GO" id="GO:0005739">
    <property type="term" value="C:mitochondrion"/>
    <property type="evidence" value="ECO:0000314"/>
    <property type="project" value="HPA"/>
</dbReference>
<dbReference type="GO" id="GO:0140596">
    <property type="term" value="C:TOM complex"/>
    <property type="evidence" value="ECO:0000303"/>
    <property type="project" value="ComplexPortal"/>
</dbReference>
<dbReference type="GO" id="GO:0030943">
    <property type="term" value="F:mitochondrion targeting sequence binding"/>
    <property type="evidence" value="ECO:0000314"/>
    <property type="project" value="FlyBase"/>
</dbReference>
<dbReference type="GO" id="GO:0008320">
    <property type="term" value="F:protein transmembrane transporter activity"/>
    <property type="evidence" value="ECO:0000250"/>
    <property type="project" value="BHF-UCL"/>
</dbReference>
<dbReference type="GO" id="GO:0030150">
    <property type="term" value="P:protein import into mitochondrial matrix"/>
    <property type="evidence" value="ECO:0000314"/>
    <property type="project" value="BHF-UCL"/>
</dbReference>
<dbReference type="GO" id="GO:0045040">
    <property type="term" value="P:protein insertion into mitochondrial outer membrane"/>
    <property type="evidence" value="ECO:0000303"/>
    <property type="project" value="ComplexPortal"/>
</dbReference>
<dbReference type="GO" id="GO:0006626">
    <property type="term" value="P:protein targeting to mitochondrion"/>
    <property type="evidence" value="ECO:0000304"/>
    <property type="project" value="HGNC-UCL"/>
</dbReference>
<dbReference type="CDD" id="cd22884">
    <property type="entry name" value="TOM22"/>
    <property type="match status" value="1"/>
</dbReference>
<dbReference type="InterPro" id="IPR005683">
    <property type="entry name" value="Tom22"/>
</dbReference>
<dbReference type="PANTHER" id="PTHR12504">
    <property type="entry name" value="MITOCHONDRIAL IMPORT RECEPTOR SUBUNIT TOM22"/>
    <property type="match status" value="1"/>
</dbReference>
<dbReference type="PANTHER" id="PTHR12504:SF0">
    <property type="entry name" value="MITOCHONDRIAL IMPORT RECEPTOR SUBUNIT TOM22 HOMOLOG"/>
    <property type="match status" value="1"/>
</dbReference>
<dbReference type="Pfam" id="PF04281">
    <property type="entry name" value="Tom22"/>
    <property type="match status" value="1"/>
</dbReference>
<accession>Q9NS69</accession>
<sequence length="142" mass="15522">MAAAVAAAGAGEPQSPDELLPKGDAEKPEEELEEDDDEELDETLSERLWGLTEMFPERVRSAAGATFDLSLFVAQKMYRFSRAALWIGTTSFMILVLPVVFETEKLQMEQQQQLQQRQILLGPNTGLSGGMPGALPSLPGKI</sequence>
<protein>
    <recommendedName>
        <fullName>Mitochondrial import receptor subunit TOM22 homolog</fullName>
        <shortName>hTom22</shortName>
    </recommendedName>
    <alternativeName>
        <fullName>1C9-2</fullName>
    </alternativeName>
    <alternativeName>
        <fullName>Translocase of outer membrane 22 kDa subunit homolog</fullName>
    </alternativeName>
</protein>
<comment type="function">
    <text evidence="2 6">Central receptor component of the translocase of the outer membrane of mitochondria (TOM complex) responsible for the recognition and translocation of cytosolically synthesized mitochondrial preproteins. Together with the peripheral receptor TOM20 functions as the transit peptide receptor and facilitates the movement of preproteins into the translocation pore (PubMed:10982837). Required for the translocation across the mitochondrial outer membrane of cytochrome P450 monooxygenases (By similarity).</text>
</comment>
<comment type="subunit">
    <text evidence="2 7">Forms part of the preprotein translocase complex of the outer mitochondrial membrane (TOM complex) which consists of at least 7 different proteins (TOMM5, TOMM6, TOMM7, TOMM20, TOMM22, TOMM40 and TOMM70) (PubMed:18331822). Interacts with TOMM40. Interacts with PPP2R2B (By similarity).</text>
</comment>
<comment type="interaction">
    <interactant intactId="EBI-1047508">
        <id>Q9NS69</id>
    </interactant>
    <interactant intactId="EBI-13059134">
        <id>Q13520</id>
        <label>AQP6</label>
    </interactant>
    <organismsDiffer>false</organismsDiffer>
    <experiments>3</experiments>
</comment>
<comment type="interaction">
    <interactant intactId="EBI-1047508">
        <id>Q9NS69</id>
    </interactant>
    <interactant intactId="EBI-466029">
        <id>P42858</id>
        <label>HTT</label>
    </interactant>
    <organismsDiffer>false</organismsDiffer>
    <experiments>6</experiments>
</comment>
<comment type="interaction">
    <interactant intactId="EBI-1047508">
        <id>Q9NS69</id>
    </interactant>
    <interactant intactId="EBI-21591415">
        <id>P13473-2</id>
        <label>LAMP2</label>
    </interactant>
    <organismsDiffer>false</organismsDiffer>
    <experiments>3</experiments>
</comment>
<comment type="interaction">
    <interactant intactId="EBI-1047508">
        <id>Q9NS69</id>
    </interactant>
    <interactant intactId="EBI-2623095">
        <id>Q9Y371</id>
        <label>SH3GLB1</label>
    </interactant>
    <organismsDiffer>false</organismsDiffer>
    <experiments>3</experiments>
</comment>
<comment type="interaction">
    <interactant intactId="EBI-1047508">
        <id>Q9NS69</id>
    </interactant>
    <interactant intactId="EBI-1180558">
        <id>Q9P0U1</id>
        <label>TOMM7</label>
    </interactant>
    <organismsDiffer>false</organismsDiffer>
    <experiments>2</experiments>
</comment>
<comment type="interaction">
    <interactant intactId="EBI-1047508">
        <id>Q9NS69</id>
    </interactant>
    <interactant intactId="EBI-10042882">
        <id>P0DOE7</id>
        <label>M</label>
    </interactant>
    <organismsDiffer>true</organismsDiffer>
    <experiments>2</experiments>
</comment>
<comment type="subcellular location">
    <subcellularLocation>
        <location evidence="6">Mitochondrion outer membrane</location>
        <topology evidence="6">Single-pass membrane protein</topology>
    </subcellularLocation>
</comment>
<comment type="tissue specificity">
    <text>Ubiquitous.</text>
</comment>
<comment type="domain">
    <text evidence="1">Requires the transmembrane domain (TMD), a short segment (the import sequence) in the cytoplasmic domain localizing separately from the TMD and the C-tail signal in the C-terminal domain for efficient targeting and integration into the TOM complex (By similarity). The N-terminal domain (residues 1-62) is important for binding to the unfolded mature imported proteins. Residues (49-71) of the cytoplasmic domain interacts with TOMM20 while the C-terminal segment (residues 63-82) binds presequence of preproteins.</text>
</comment>
<comment type="similarity">
    <text evidence="9">Belongs to the Tom22 family.</text>
</comment>
<evidence type="ECO:0000250" key="1"/>
<evidence type="ECO:0000250" key="2">
    <source>
        <dbReference type="UniProtKB" id="Q75Q41"/>
    </source>
</evidence>
<evidence type="ECO:0000250" key="3">
    <source>
        <dbReference type="UniProtKB" id="Q9CPQ3"/>
    </source>
</evidence>
<evidence type="ECO:0000255" key="4"/>
<evidence type="ECO:0000256" key="5">
    <source>
        <dbReference type="SAM" id="MobiDB-lite"/>
    </source>
</evidence>
<evidence type="ECO:0000269" key="6">
    <source>
    </source>
</evidence>
<evidence type="ECO:0000269" key="7">
    <source>
    </source>
</evidence>
<evidence type="ECO:0000269" key="8">
    <source ref="6"/>
</evidence>
<evidence type="ECO:0000305" key="9"/>
<evidence type="ECO:0007744" key="10">
    <source>
    </source>
</evidence>
<evidence type="ECO:0007744" key="11">
    <source>
    </source>
</evidence>
<evidence type="ECO:0007744" key="12">
    <source>
    </source>
</evidence>
<evidence type="ECO:0007744" key="13">
    <source>
    </source>
</evidence>
<evidence type="ECO:0007744" key="14">
    <source>
    </source>
</evidence>
<evidence type="ECO:0007744" key="15">
    <source>
    </source>
</evidence>
<evidence type="ECO:0007744" key="16">
    <source>
    </source>
</evidence>
<evidence type="ECO:0007744" key="17">
    <source>
    </source>
</evidence>
<evidence type="ECO:0007829" key="18">
    <source>
        <dbReference type="PDB" id="7CP9"/>
    </source>
</evidence>
<evidence type="ECO:0007829" key="19">
    <source>
        <dbReference type="PDB" id="7VD2"/>
    </source>
</evidence>
<keyword id="KW-0002">3D-structure</keyword>
<keyword id="KW-0007">Acetylation</keyword>
<keyword id="KW-0903">Direct protein sequencing</keyword>
<keyword id="KW-0472">Membrane</keyword>
<keyword id="KW-0496">Mitochondrion</keyword>
<keyword id="KW-1000">Mitochondrion outer membrane</keyword>
<keyword id="KW-0597">Phosphoprotein</keyword>
<keyword id="KW-0653">Protein transport</keyword>
<keyword id="KW-1267">Proteomics identification</keyword>
<keyword id="KW-0675">Receptor</keyword>
<keyword id="KW-1185">Reference proteome</keyword>
<keyword id="KW-0811">Translocation</keyword>
<keyword id="KW-0812">Transmembrane</keyword>
<keyword id="KW-1133">Transmembrane helix</keyword>
<keyword id="KW-0813">Transport</keyword>